<organism>
    <name type="scientific">Rhodopseudomonas palustris (strain ATCC BAA-98 / CGA009)</name>
    <dbReference type="NCBI Taxonomy" id="258594"/>
    <lineage>
        <taxon>Bacteria</taxon>
        <taxon>Pseudomonadati</taxon>
        <taxon>Pseudomonadota</taxon>
        <taxon>Alphaproteobacteria</taxon>
        <taxon>Hyphomicrobiales</taxon>
        <taxon>Nitrobacteraceae</taxon>
        <taxon>Rhodopseudomonas</taxon>
    </lineage>
</organism>
<reference key="1">
    <citation type="journal article" date="2004" name="Nat. Biotechnol.">
        <title>Complete genome sequence of the metabolically versatile photosynthetic bacterium Rhodopseudomonas palustris.</title>
        <authorList>
            <person name="Larimer F.W."/>
            <person name="Chain P."/>
            <person name="Hauser L."/>
            <person name="Lamerdin J.E."/>
            <person name="Malfatti S."/>
            <person name="Do L."/>
            <person name="Land M.L."/>
            <person name="Pelletier D.A."/>
            <person name="Beatty J.T."/>
            <person name="Lang A.S."/>
            <person name="Tabita F.R."/>
            <person name="Gibson J.L."/>
            <person name="Hanson T.E."/>
            <person name="Bobst C."/>
            <person name="Torres y Torres J.L."/>
            <person name="Peres C."/>
            <person name="Harrison F.H."/>
            <person name="Gibson J."/>
            <person name="Harwood C.S."/>
        </authorList>
    </citation>
    <scope>NUCLEOTIDE SEQUENCE [LARGE SCALE GENOMIC DNA]</scope>
    <source>
        <strain>ATCC BAA-98 / CGA009</strain>
    </source>
</reference>
<reference key="2">
    <citation type="journal article" date="2004" name="J. Proteome Res.">
        <title>Characterization of the 70S ribosome from Rhodopseudomonas palustris using an integrated 'top-down' and 'bottom-up' mass spectrometric approach.</title>
        <authorList>
            <person name="Strader M.B."/>
            <person name="VerBerkmoes N.C."/>
            <person name="Tabb D.L."/>
            <person name="Connelly H.M."/>
            <person name="Barton J.W."/>
            <person name="Bruce B.D."/>
            <person name="Pelletier D.A."/>
            <person name="Davison B.H."/>
            <person name="Hettich R.L."/>
            <person name="Larimer F.W."/>
            <person name="Hurst G.B."/>
        </authorList>
    </citation>
    <scope>MASS SPECTROMETRY</scope>
    <source>
        <strain>ATCC BAA-98 / CGA009</strain>
    </source>
</reference>
<keyword id="KW-0687">Ribonucleoprotein</keyword>
<keyword id="KW-0689">Ribosomal protein</keyword>
<keyword id="KW-0694">RNA-binding</keyword>
<keyword id="KW-0699">rRNA-binding</keyword>
<name>RS18_RHOPA</name>
<gene>
    <name evidence="1" type="primary">rpsR</name>
    <name type="ordered locus">RPA3078</name>
</gene>
<protein>
    <recommendedName>
        <fullName evidence="1">Small ribosomal subunit protein bS18</fullName>
    </recommendedName>
    <alternativeName>
        <fullName evidence="3">30S ribosomal protein S18</fullName>
    </alternativeName>
    <alternativeName>
        <fullName>RRP-S18</fullName>
    </alternativeName>
</protein>
<evidence type="ECO:0000255" key="1">
    <source>
        <dbReference type="HAMAP-Rule" id="MF_00270"/>
    </source>
</evidence>
<evidence type="ECO:0000269" key="2">
    <source>
    </source>
</evidence>
<evidence type="ECO:0000305" key="3"/>
<dbReference type="EMBL" id="BX572602">
    <property type="protein sequence ID" value="CAE28519.1"/>
    <property type="molecule type" value="Genomic_DNA"/>
</dbReference>
<dbReference type="RefSeq" id="WP_011158623.1">
    <property type="nucleotide sequence ID" value="NZ_CP116810.1"/>
</dbReference>
<dbReference type="SMR" id="Q6N5A3"/>
<dbReference type="IntAct" id="Q6N5A3">
    <property type="interactions" value="1"/>
</dbReference>
<dbReference type="STRING" id="258594.RPA3078"/>
<dbReference type="GeneID" id="66894160"/>
<dbReference type="eggNOG" id="COG0238">
    <property type="taxonomic scope" value="Bacteria"/>
</dbReference>
<dbReference type="HOGENOM" id="CLU_148710_2_3_5"/>
<dbReference type="PhylomeDB" id="Q6N5A3"/>
<dbReference type="GO" id="GO:0022627">
    <property type="term" value="C:cytosolic small ribosomal subunit"/>
    <property type="evidence" value="ECO:0007669"/>
    <property type="project" value="TreeGrafter"/>
</dbReference>
<dbReference type="GO" id="GO:0070181">
    <property type="term" value="F:small ribosomal subunit rRNA binding"/>
    <property type="evidence" value="ECO:0007669"/>
    <property type="project" value="TreeGrafter"/>
</dbReference>
<dbReference type="GO" id="GO:0003735">
    <property type="term" value="F:structural constituent of ribosome"/>
    <property type="evidence" value="ECO:0007669"/>
    <property type="project" value="InterPro"/>
</dbReference>
<dbReference type="GO" id="GO:0006412">
    <property type="term" value="P:translation"/>
    <property type="evidence" value="ECO:0007669"/>
    <property type="project" value="UniProtKB-UniRule"/>
</dbReference>
<dbReference type="FunFam" id="4.10.640.10:FF:000006">
    <property type="entry name" value="30S ribosomal protein S18"/>
    <property type="match status" value="1"/>
</dbReference>
<dbReference type="Gene3D" id="4.10.640.10">
    <property type="entry name" value="Ribosomal protein S18"/>
    <property type="match status" value="1"/>
</dbReference>
<dbReference type="HAMAP" id="MF_00270">
    <property type="entry name" value="Ribosomal_bS18"/>
    <property type="match status" value="1"/>
</dbReference>
<dbReference type="InterPro" id="IPR001648">
    <property type="entry name" value="Ribosomal_bS18"/>
</dbReference>
<dbReference type="InterPro" id="IPR018275">
    <property type="entry name" value="Ribosomal_bS18_CS"/>
</dbReference>
<dbReference type="InterPro" id="IPR036870">
    <property type="entry name" value="Ribosomal_bS18_sf"/>
</dbReference>
<dbReference type="NCBIfam" id="TIGR00165">
    <property type="entry name" value="S18"/>
    <property type="match status" value="1"/>
</dbReference>
<dbReference type="PANTHER" id="PTHR13479">
    <property type="entry name" value="30S RIBOSOMAL PROTEIN S18"/>
    <property type="match status" value="1"/>
</dbReference>
<dbReference type="PANTHER" id="PTHR13479:SF40">
    <property type="entry name" value="SMALL RIBOSOMAL SUBUNIT PROTEIN BS18M"/>
    <property type="match status" value="1"/>
</dbReference>
<dbReference type="Pfam" id="PF01084">
    <property type="entry name" value="Ribosomal_S18"/>
    <property type="match status" value="1"/>
</dbReference>
<dbReference type="PRINTS" id="PR00974">
    <property type="entry name" value="RIBOSOMALS18"/>
</dbReference>
<dbReference type="SUPFAM" id="SSF46911">
    <property type="entry name" value="Ribosomal protein S18"/>
    <property type="match status" value="1"/>
</dbReference>
<dbReference type="PROSITE" id="PS00057">
    <property type="entry name" value="RIBOSOMAL_S18"/>
    <property type="match status" value="1"/>
</dbReference>
<sequence>MAEAGARRPFFRRRKTCPFTGANAPKIDYKDSKLLMRYVSERGKIVPSRITAVSAKKQRELARAIKRARFLGLLPYVIR</sequence>
<feature type="chain" id="PRO_0000111216" description="Small ribosomal subunit protein bS18">
    <location>
        <begin position="1"/>
        <end position="79"/>
    </location>
</feature>
<accession>Q6N5A3</accession>
<comment type="function">
    <text evidence="1">Binds as a heterodimer with protein bS6 to the central domain of the 16S rRNA, where it helps stabilize the platform of the 30S subunit.</text>
</comment>
<comment type="subunit">
    <text evidence="1">Part of the 30S ribosomal subunit. Forms a tight heterodimer with protein bS6.</text>
</comment>
<comment type="PTM">
    <text>Both N-terminus methionine truncation and retention have been observed for this protein.</text>
</comment>
<comment type="PTM">
    <text>May be methylated up to 6 times, on undetermined residues.</text>
</comment>
<comment type="mass spectrometry"/>
<comment type="similarity">
    <text evidence="1">Belongs to the bacterial ribosomal protein bS18 family.</text>
</comment>
<comment type="caution">
    <text evidence="3">Both N-terminus methionine truncation and retention have been observed for this protein by 2 different experiments.</text>
</comment>
<proteinExistence type="evidence at protein level"/>